<sequence>MPRKGRVPRREILPDAKYNSIIVHKLINKVMKDGKKSTAEYIVYTALERVAEKLNLSPVEVLEKALENVKPVWEVRPRRVGGATYQVPVEVEEHRRESLGIKWLVDAARERARHRGSYTMEERLAAEIMDAIENKGAAVKKKEDTHRMAEANKVFAHFKW</sequence>
<protein>
    <recommendedName>
        <fullName evidence="1">Small ribosomal subunit protein uS7</fullName>
    </recommendedName>
    <alternativeName>
        <fullName evidence="2">30S ribosomal protein S7</fullName>
    </alternativeName>
</protein>
<organism>
    <name type="scientific">Hydrogenobaculum sp. (strain Y04AAS1)</name>
    <dbReference type="NCBI Taxonomy" id="380749"/>
    <lineage>
        <taxon>Bacteria</taxon>
        <taxon>Pseudomonadati</taxon>
        <taxon>Aquificota</taxon>
        <taxon>Aquificia</taxon>
        <taxon>Aquificales</taxon>
        <taxon>Aquificaceae</taxon>
        <taxon>Hydrogenobaculum</taxon>
    </lineage>
</organism>
<reference key="1">
    <citation type="journal article" date="2009" name="J. Bacteriol.">
        <title>Complete and draft genome sequences of six members of the Aquificales.</title>
        <authorList>
            <person name="Reysenbach A.-L."/>
            <person name="Hamamura N."/>
            <person name="Podar M."/>
            <person name="Griffiths E."/>
            <person name="Ferreira S."/>
            <person name="Hochstein R."/>
            <person name="Heidelberg J."/>
            <person name="Johnson J."/>
            <person name="Mead D."/>
            <person name="Pohorille A."/>
            <person name="Sarmiento M."/>
            <person name="Schweighofer K."/>
            <person name="Seshadri R."/>
            <person name="Voytek M.A."/>
        </authorList>
    </citation>
    <scope>NUCLEOTIDE SEQUENCE [LARGE SCALE GENOMIC DNA]</scope>
    <source>
        <strain>Y04AAS1</strain>
    </source>
</reference>
<feature type="chain" id="PRO_1000125956" description="Small ribosomal subunit protein uS7">
    <location>
        <begin position="1"/>
        <end position="160"/>
    </location>
</feature>
<evidence type="ECO:0000255" key="1">
    <source>
        <dbReference type="HAMAP-Rule" id="MF_00480"/>
    </source>
</evidence>
<evidence type="ECO:0000305" key="2"/>
<gene>
    <name evidence="1" type="primary">rpsG</name>
    <name type="ordered locus">HY04AAS1_0261</name>
</gene>
<dbReference type="EMBL" id="CP001130">
    <property type="protein sequence ID" value="ACG56951.1"/>
    <property type="molecule type" value="Genomic_DNA"/>
</dbReference>
<dbReference type="RefSeq" id="WP_012513308.1">
    <property type="nucleotide sequence ID" value="NC_011126.1"/>
</dbReference>
<dbReference type="SMR" id="B4U740"/>
<dbReference type="STRING" id="380749.HY04AAS1_0261"/>
<dbReference type="KEGG" id="hya:HY04AAS1_0261"/>
<dbReference type="eggNOG" id="COG0049">
    <property type="taxonomic scope" value="Bacteria"/>
</dbReference>
<dbReference type="HOGENOM" id="CLU_072226_1_1_0"/>
<dbReference type="OrthoDB" id="9807653at2"/>
<dbReference type="GO" id="GO:0015935">
    <property type="term" value="C:small ribosomal subunit"/>
    <property type="evidence" value="ECO:0007669"/>
    <property type="project" value="InterPro"/>
</dbReference>
<dbReference type="GO" id="GO:0019843">
    <property type="term" value="F:rRNA binding"/>
    <property type="evidence" value="ECO:0007669"/>
    <property type="project" value="UniProtKB-UniRule"/>
</dbReference>
<dbReference type="GO" id="GO:0003735">
    <property type="term" value="F:structural constituent of ribosome"/>
    <property type="evidence" value="ECO:0007669"/>
    <property type="project" value="InterPro"/>
</dbReference>
<dbReference type="GO" id="GO:0000049">
    <property type="term" value="F:tRNA binding"/>
    <property type="evidence" value="ECO:0007669"/>
    <property type="project" value="UniProtKB-UniRule"/>
</dbReference>
<dbReference type="GO" id="GO:0006412">
    <property type="term" value="P:translation"/>
    <property type="evidence" value="ECO:0007669"/>
    <property type="project" value="UniProtKB-UniRule"/>
</dbReference>
<dbReference type="CDD" id="cd14869">
    <property type="entry name" value="uS7_Bacteria"/>
    <property type="match status" value="1"/>
</dbReference>
<dbReference type="FunFam" id="1.10.455.10:FF:000001">
    <property type="entry name" value="30S ribosomal protein S7"/>
    <property type="match status" value="1"/>
</dbReference>
<dbReference type="Gene3D" id="1.10.455.10">
    <property type="entry name" value="Ribosomal protein S7 domain"/>
    <property type="match status" value="1"/>
</dbReference>
<dbReference type="HAMAP" id="MF_00480_B">
    <property type="entry name" value="Ribosomal_uS7_B"/>
    <property type="match status" value="1"/>
</dbReference>
<dbReference type="InterPro" id="IPR000235">
    <property type="entry name" value="Ribosomal_uS7"/>
</dbReference>
<dbReference type="InterPro" id="IPR005717">
    <property type="entry name" value="Ribosomal_uS7_bac/org-type"/>
</dbReference>
<dbReference type="InterPro" id="IPR020606">
    <property type="entry name" value="Ribosomal_uS7_CS"/>
</dbReference>
<dbReference type="InterPro" id="IPR023798">
    <property type="entry name" value="Ribosomal_uS7_dom"/>
</dbReference>
<dbReference type="InterPro" id="IPR036823">
    <property type="entry name" value="Ribosomal_uS7_dom_sf"/>
</dbReference>
<dbReference type="NCBIfam" id="TIGR01029">
    <property type="entry name" value="rpsG_bact"/>
    <property type="match status" value="1"/>
</dbReference>
<dbReference type="PANTHER" id="PTHR11205">
    <property type="entry name" value="RIBOSOMAL PROTEIN S7"/>
    <property type="match status" value="1"/>
</dbReference>
<dbReference type="Pfam" id="PF00177">
    <property type="entry name" value="Ribosomal_S7"/>
    <property type="match status" value="1"/>
</dbReference>
<dbReference type="PIRSF" id="PIRSF002122">
    <property type="entry name" value="RPS7p_RPS7a_RPS5e_RPS7o"/>
    <property type="match status" value="1"/>
</dbReference>
<dbReference type="SUPFAM" id="SSF47973">
    <property type="entry name" value="Ribosomal protein S7"/>
    <property type="match status" value="1"/>
</dbReference>
<dbReference type="PROSITE" id="PS00052">
    <property type="entry name" value="RIBOSOMAL_S7"/>
    <property type="match status" value="1"/>
</dbReference>
<comment type="function">
    <text evidence="1">One of the primary rRNA binding proteins, it binds directly to 16S rRNA where it nucleates assembly of the head domain of the 30S subunit. Is located at the subunit interface close to the decoding center, probably blocks exit of the E-site tRNA.</text>
</comment>
<comment type="subunit">
    <text evidence="1">Part of the 30S ribosomal subunit. Contacts proteins S9 and S11.</text>
</comment>
<comment type="similarity">
    <text evidence="1">Belongs to the universal ribosomal protein uS7 family.</text>
</comment>
<name>RS7_HYDS0</name>
<keyword id="KW-0687">Ribonucleoprotein</keyword>
<keyword id="KW-0689">Ribosomal protein</keyword>
<keyword id="KW-0694">RNA-binding</keyword>
<keyword id="KW-0699">rRNA-binding</keyword>
<keyword id="KW-0820">tRNA-binding</keyword>
<proteinExistence type="inferred from homology"/>
<accession>B4U740</accession>